<dbReference type="EC" id="2.7.7.23" evidence="1"/>
<dbReference type="EC" id="2.3.1.157" evidence="1"/>
<dbReference type="EMBL" id="CU207211">
    <property type="protein sequence ID" value="CAL63303.1"/>
    <property type="molecule type" value="Genomic_DNA"/>
</dbReference>
<dbReference type="SMR" id="A4G9W6"/>
<dbReference type="STRING" id="204773.HEAR3196"/>
<dbReference type="KEGG" id="har:HEAR3196"/>
<dbReference type="eggNOG" id="COG1207">
    <property type="taxonomic scope" value="Bacteria"/>
</dbReference>
<dbReference type="HOGENOM" id="CLU_029499_15_2_4"/>
<dbReference type="OrthoDB" id="9775031at2"/>
<dbReference type="UniPathway" id="UPA00113">
    <property type="reaction ID" value="UER00532"/>
</dbReference>
<dbReference type="UniPathway" id="UPA00113">
    <property type="reaction ID" value="UER00533"/>
</dbReference>
<dbReference type="UniPathway" id="UPA00973"/>
<dbReference type="Proteomes" id="UP000006697">
    <property type="component" value="Chromosome"/>
</dbReference>
<dbReference type="GO" id="GO:0005737">
    <property type="term" value="C:cytoplasm"/>
    <property type="evidence" value="ECO:0007669"/>
    <property type="project" value="UniProtKB-SubCell"/>
</dbReference>
<dbReference type="GO" id="GO:0016020">
    <property type="term" value="C:membrane"/>
    <property type="evidence" value="ECO:0007669"/>
    <property type="project" value="GOC"/>
</dbReference>
<dbReference type="GO" id="GO:0019134">
    <property type="term" value="F:glucosamine-1-phosphate N-acetyltransferase activity"/>
    <property type="evidence" value="ECO:0007669"/>
    <property type="project" value="UniProtKB-UniRule"/>
</dbReference>
<dbReference type="GO" id="GO:0000287">
    <property type="term" value="F:magnesium ion binding"/>
    <property type="evidence" value="ECO:0007669"/>
    <property type="project" value="UniProtKB-UniRule"/>
</dbReference>
<dbReference type="GO" id="GO:0003977">
    <property type="term" value="F:UDP-N-acetylglucosamine diphosphorylase activity"/>
    <property type="evidence" value="ECO:0007669"/>
    <property type="project" value="UniProtKB-UniRule"/>
</dbReference>
<dbReference type="GO" id="GO:0000902">
    <property type="term" value="P:cell morphogenesis"/>
    <property type="evidence" value="ECO:0007669"/>
    <property type="project" value="UniProtKB-UniRule"/>
</dbReference>
<dbReference type="GO" id="GO:0071555">
    <property type="term" value="P:cell wall organization"/>
    <property type="evidence" value="ECO:0007669"/>
    <property type="project" value="UniProtKB-KW"/>
</dbReference>
<dbReference type="GO" id="GO:0009245">
    <property type="term" value="P:lipid A biosynthetic process"/>
    <property type="evidence" value="ECO:0007669"/>
    <property type="project" value="UniProtKB-UniRule"/>
</dbReference>
<dbReference type="GO" id="GO:0009252">
    <property type="term" value="P:peptidoglycan biosynthetic process"/>
    <property type="evidence" value="ECO:0007669"/>
    <property type="project" value="UniProtKB-UniRule"/>
</dbReference>
<dbReference type="GO" id="GO:0008360">
    <property type="term" value="P:regulation of cell shape"/>
    <property type="evidence" value="ECO:0007669"/>
    <property type="project" value="UniProtKB-KW"/>
</dbReference>
<dbReference type="GO" id="GO:0006048">
    <property type="term" value="P:UDP-N-acetylglucosamine biosynthetic process"/>
    <property type="evidence" value="ECO:0007669"/>
    <property type="project" value="UniProtKB-UniPathway"/>
</dbReference>
<dbReference type="CDD" id="cd02540">
    <property type="entry name" value="GT2_GlmU_N_bac"/>
    <property type="match status" value="1"/>
</dbReference>
<dbReference type="CDD" id="cd03353">
    <property type="entry name" value="LbH_GlmU_C"/>
    <property type="match status" value="1"/>
</dbReference>
<dbReference type="Gene3D" id="2.160.10.10">
    <property type="entry name" value="Hexapeptide repeat proteins"/>
    <property type="match status" value="1"/>
</dbReference>
<dbReference type="Gene3D" id="3.90.550.10">
    <property type="entry name" value="Spore Coat Polysaccharide Biosynthesis Protein SpsA, Chain A"/>
    <property type="match status" value="1"/>
</dbReference>
<dbReference type="HAMAP" id="MF_01631">
    <property type="entry name" value="GlmU"/>
    <property type="match status" value="1"/>
</dbReference>
<dbReference type="InterPro" id="IPR005882">
    <property type="entry name" value="Bifunctional_GlmU"/>
</dbReference>
<dbReference type="InterPro" id="IPR050065">
    <property type="entry name" value="GlmU-like"/>
</dbReference>
<dbReference type="InterPro" id="IPR038009">
    <property type="entry name" value="GlmU_C_LbH"/>
</dbReference>
<dbReference type="InterPro" id="IPR001451">
    <property type="entry name" value="Hexapep"/>
</dbReference>
<dbReference type="InterPro" id="IPR025877">
    <property type="entry name" value="MobA-like_NTP_Trfase"/>
</dbReference>
<dbReference type="InterPro" id="IPR029044">
    <property type="entry name" value="Nucleotide-diphossugar_trans"/>
</dbReference>
<dbReference type="InterPro" id="IPR011004">
    <property type="entry name" value="Trimer_LpxA-like_sf"/>
</dbReference>
<dbReference type="NCBIfam" id="TIGR01173">
    <property type="entry name" value="glmU"/>
    <property type="match status" value="1"/>
</dbReference>
<dbReference type="PANTHER" id="PTHR43584:SF3">
    <property type="entry name" value="BIFUNCTIONAL PROTEIN GLMU"/>
    <property type="match status" value="1"/>
</dbReference>
<dbReference type="PANTHER" id="PTHR43584">
    <property type="entry name" value="NUCLEOTIDYL TRANSFERASE"/>
    <property type="match status" value="1"/>
</dbReference>
<dbReference type="Pfam" id="PF00132">
    <property type="entry name" value="Hexapep"/>
    <property type="match status" value="1"/>
</dbReference>
<dbReference type="Pfam" id="PF14602">
    <property type="entry name" value="Hexapep_2"/>
    <property type="match status" value="1"/>
</dbReference>
<dbReference type="Pfam" id="PF12804">
    <property type="entry name" value="NTP_transf_3"/>
    <property type="match status" value="1"/>
</dbReference>
<dbReference type="SUPFAM" id="SSF53448">
    <property type="entry name" value="Nucleotide-diphospho-sugar transferases"/>
    <property type="match status" value="1"/>
</dbReference>
<dbReference type="SUPFAM" id="SSF51161">
    <property type="entry name" value="Trimeric LpxA-like enzymes"/>
    <property type="match status" value="1"/>
</dbReference>
<name>GLMU_HERAR</name>
<protein>
    <recommendedName>
        <fullName evidence="1">Bifunctional protein GlmU</fullName>
    </recommendedName>
    <domain>
        <recommendedName>
            <fullName evidence="1">UDP-N-acetylglucosamine pyrophosphorylase</fullName>
            <ecNumber evidence="1">2.7.7.23</ecNumber>
        </recommendedName>
        <alternativeName>
            <fullName evidence="1">N-acetylglucosamine-1-phosphate uridyltransferase</fullName>
        </alternativeName>
    </domain>
    <domain>
        <recommendedName>
            <fullName evidence="1">Glucosamine-1-phosphate N-acetyltransferase</fullName>
            <ecNumber evidence="1">2.3.1.157</ecNumber>
        </recommendedName>
    </domain>
</protein>
<proteinExistence type="inferred from homology"/>
<reference key="1">
    <citation type="journal article" date="2007" name="PLoS Genet.">
        <title>A tale of two oxidation states: bacterial colonization of arsenic-rich environments.</title>
        <authorList>
            <person name="Muller D."/>
            <person name="Medigue C."/>
            <person name="Koechler S."/>
            <person name="Barbe V."/>
            <person name="Barakat M."/>
            <person name="Talla E."/>
            <person name="Bonnefoy V."/>
            <person name="Krin E."/>
            <person name="Arsene-Ploetze F."/>
            <person name="Carapito C."/>
            <person name="Chandler M."/>
            <person name="Cournoyer B."/>
            <person name="Cruveiller S."/>
            <person name="Dossat C."/>
            <person name="Duval S."/>
            <person name="Heymann M."/>
            <person name="Leize E."/>
            <person name="Lieutaud A."/>
            <person name="Lievremont D."/>
            <person name="Makita Y."/>
            <person name="Mangenot S."/>
            <person name="Nitschke W."/>
            <person name="Ortet P."/>
            <person name="Perdrial N."/>
            <person name="Schoepp B."/>
            <person name="Siguier P."/>
            <person name="Simeonova D.D."/>
            <person name="Rouy Z."/>
            <person name="Segurens B."/>
            <person name="Turlin E."/>
            <person name="Vallenet D."/>
            <person name="van Dorsselaer A."/>
            <person name="Weiss S."/>
            <person name="Weissenbach J."/>
            <person name="Lett M.-C."/>
            <person name="Danchin A."/>
            <person name="Bertin P.N."/>
        </authorList>
    </citation>
    <scope>NUCLEOTIDE SEQUENCE [LARGE SCALE GENOMIC DNA]</scope>
    <source>
        <strain>ULPAs1</strain>
    </source>
</reference>
<evidence type="ECO:0000255" key="1">
    <source>
        <dbReference type="HAMAP-Rule" id="MF_01631"/>
    </source>
</evidence>
<keyword id="KW-0012">Acyltransferase</keyword>
<keyword id="KW-0133">Cell shape</keyword>
<keyword id="KW-0961">Cell wall biogenesis/degradation</keyword>
<keyword id="KW-0963">Cytoplasm</keyword>
<keyword id="KW-0460">Magnesium</keyword>
<keyword id="KW-0479">Metal-binding</keyword>
<keyword id="KW-0511">Multifunctional enzyme</keyword>
<keyword id="KW-0548">Nucleotidyltransferase</keyword>
<keyword id="KW-0573">Peptidoglycan synthesis</keyword>
<keyword id="KW-1185">Reference proteome</keyword>
<keyword id="KW-0677">Repeat</keyword>
<keyword id="KW-0808">Transferase</keyword>
<sequence length="452" mass="48302">MNIVILAAGMGKRMQSALPKVLHPLAGKPLLSHVIDTARQLSPSTLCIIYGHGGEQVPQLLQSKDLSFAKQEPQLGTGHAVMQAVPQLNDDSPTLILYGDVPLTTAASLQRLLDIAGADKLGILTVDLDNPTGYGRIVRENGAITRIVEQKDANEQERSIREVNTGIIVAPTKQLKTWLANLSNKNAQGEYYLTDIVASAVADGVQVVSAQPDHVWETHGVNSKVQLAELERVHQNNIARALLEHGVTLADPARIDVRGTLTCGRDVSIDVGCIFEGDVTLADGVRIDAYCVLHNTTVGAQTHIRPYSHFEGATVGTACIIGPYARLRPGAVLGEDVHIGNFVEVKNSDIAAHSKANHLTYIGDSTIGSRVNIGAGTITCNYDGVNKSRTIIEDDVFVGSATQLIAPIRVGKGSTIGAGTTLTKDAPADKLTVSRSRQITVDGWQRPVKIKK</sequence>
<feature type="chain" id="PRO_1000056164" description="Bifunctional protein GlmU">
    <location>
        <begin position="1"/>
        <end position="452"/>
    </location>
</feature>
<feature type="region of interest" description="Pyrophosphorylase" evidence="1">
    <location>
        <begin position="1"/>
        <end position="224"/>
    </location>
</feature>
<feature type="region of interest" description="Linker" evidence="1">
    <location>
        <begin position="225"/>
        <end position="245"/>
    </location>
</feature>
<feature type="region of interest" description="N-acetyltransferase" evidence="1">
    <location>
        <begin position="246"/>
        <end position="452"/>
    </location>
</feature>
<feature type="active site" description="Proton acceptor" evidence="1">
    <location>
        <position position="358"/>
    </location>
</feature>
<feature type="binding site" evidence="1">
    <location>
        <begin position="6"/>
        <end position="9"/>
    </location>
    <ligand>
        <name>UDP-N-acetyl-alpha-D-glucosamine</name>
        <dbReference type="ChEBI" id="CHEBI:57705"/>
    </ligand>
</feature>
<feature type="binding site" evidence="1">
    <location>
        <position position="20"/>
    </location>
    <ligand>
        <name>UDP-N-acetyl-alpha-D-glucosamine</name>
        <dbReference type="ChEBI" id="CHEBI:57705"/>
    </ligand>
</feature>
<feature type="binding site" evidence="1">
    <location>
        <position position="71"/>
    </location>
    <ligand>
        <name>UDP-N-acetyl-alpha-D-glucosamine</name>
        <dbReference type="ChEBI" id="CHEBI:57705"/>
    </ligand>
</feature>
<feature type="binding site" evidence="1">
    <location>
        <begin position="76"/>
        <end position="77"/>
    </location>
    <ligand>
        <name>UDP-N-acetyl-alpha-D-glucosamine</name>
        <dbReference type="ChEBI" id="CHEBI:57705"/>
    </ligand>
</feature>
<feature type="binding site" evidence="1">
    <location>
        <begin position="98"/>
        <end position="100"/>
    </location>
    <ligand>
        <name>UDP-N-acetyl-alpha-D-glucosamine</name>
        <dbReference type="ChEBI" id="CHEBI:57705"/>
    </ligand>
</feature>
<feature type="binding site" evidence="1">
    <location>
        <position position="100"/>
    </location>
    <ligand>
        <name>Mg(2+)</name>
        <dbReference type="ChEBI" id="CHEBI:18420"/>
    </ligand>
</feature>
<feature type="binding site" evidence="1">
    <location>
        <position position="135"/>
    </location>
    <ligand>
        <name>UDP-N-acetyl-alpha-D-glucosamine</name>
        <dbReference type="ChEBI" id="CHEBI:57705"/>
    </ligand>
</feature>
<feature type="binding site" evidence="1">
    <location>
        <position position="149"/>
    </location>
    <ligand>
        <name>UDP-N-acetyl-alpha-D-glucosamine</name>
        <dbReference type="ChEBI" id="CHEBI:57705"/>
    </ligand>
</feature>
<feature type="binding site" evidence="1">
    <location>
        <position position="164"/>
    </location>
    <ligand>
        <name>UDP-N-acetyl-alpha-D-glucosamine</name>
        <dbReference type="ChEBI" id="CHEBI:57705"/>
    </ligand>
</feature>
<feature type="binding site" evidence="1">
    <location>
        <position position="222"/>
    </location>
    <ligand>
        <name>Mg(2+)</name>
        <dbReference type="ChEBI" id="CHEBI:18420"/>
    </ligand>
</feature>
<feature type="binding site" evidence="1">
    <location>
        <position position="222"/>
    </location>
    <ligand>
        <name>UDP-N-acetyl-alpha-D-glucosamine</name>
        <dbReference type="ChEBI" id="CHEBI:57705"/>
    </ligand>
</feature>
<feature type="binding site" evidence="1">
    <location>
        <position position="328"/>
    </location>
    <ligand>
        <name>UDP-N-acetyl-alpha-D-glucosamine</name>
        <dbReference type="ChEBI" id="CHEBI:57705"/>
    </ligand>
</feature>
<feature type="binding site" evidence="1">
    <location>
        <position position="346"/>
    </location>
    <ligand>
        <name>UDP-N-acetyl-alpha-D-glucosamine</name>
        <dbReference type="ChEBI" id="CHEBI:57705"/>
    </ligand>
</feature>
<feature type="binding site" evidence="1">
    <location>
        <position position="361"/>
    </location>
    <ligand>
        <name>UDP-N-acetyl-alpha-D-glucosamine</name>
        <dbReference type="ChEBI" id="CHEBI:57705"/>
    </ligand>
</feature>
<feature type="binding site" evidence="1">
    <location>
        <position position="372"/>
    </location>
    <ligand>
        <name>UDP-N-acetyl-alpha-D-glucosamine</name>
        <dbReference type="ChEBI" id="CHEBI:57705"/>
    </ligand>
</feature>
<feature type="binding site" evidence="1">
    <location>
        <position position="375"/>
    </location>
    <ligand>
        <name>acetyl-CoA</name>
        <dbReference type="ChEBI" id="CHEBI:57288"/>
    </ligand>
</feature>
<feature type="binding site" evidence="1">
    <location>
        <begin position="381"/>
        <end position="382"/>
    </location>
    <ligand>
        <name>acetyl-CoA</name>
        <dbReference type="ChEBI" id="CHEBI:57288"/>
    </ligand>
</feature>
<feature type="binding site" evidence="1">
    <location>
        <position position="400"/>
    </location>
    <ligand>
        <name>acetyl-CoA</name>
        <dbReference type="ChEBI" id="CHEBI:57288"/>
    </ligand>
</feature>
<feature type="binding site" evidence="1">
    <location>
        <position position="418"/>
    </location>
    <ligand>
        <name>acetyl-CoA</name>
        <dbReference type="ChEBI" id="CHEBI:57288"/>
    </ligand>
</feature>
<feature type="binding site" evidence="1">
    <location>
        <position position="435"/>
    </location>
    <ligand>
        <name>acetyl-CoA</name>
        <dbReference type="ChEBI" id="CHEBI:57288"/>
    </ligand>
</feature>
<comment type="function">
    <text evidence="1">Catalyzes the last two sequential reactions in the de novo biosynthetic pathway for UDP-N-acetylglucosamine (UDP-GlcNAc). The C-terminal domain catalyzes the transfer of acetyl group from acetyl coenzyme A to glucosamine-1-phosphate (GlcN-1-P) to produce N-acetylglucosamine-1-phosphate (GlcNAc-1-P), which is converted into UDP-GlcNAc by the transfer of uridine 5-monophosphate (from uridine 5-triphosphate), a reaction catalyzed by the N-terminal domain.</text>
</comment>
<comment type="catalytic activity">
    <reaction evidence="1">
        <text>alpha-D-glucosamine 1-phosphate + acetyl-CoA = N-acetyl-alpha-D-glucosamine 1-phosphate + CoA + H(+)</text>
        <dbReference type="Rhea" id="RHEA:13725"/>
        <dbReference type="ChEBI" id="CHEBI:15378"/>
        <dbReference type="ChEBI" id="CHEBI:57287"/>
        <dbReference type="ChEBI" id="CHEBI:57288"/>
        <dbReference type="ChEBI" id="CHEBI:57776"/>
        <dbReference type="ChEBI" id="CHEBI:58516"/>
        <dbReference type="EC" id="2.3.1.157"/>
    </reaction>
</comment>
<comment type="catalytic activity">
    <reaction evidence="1">
        <text>N-acetyl-alpha-D-glucosamine 1-phosphate + UTP + H(+) = UDP-N-acetyl-alpha-D-glucosamine + diphosphate</text>
        <dbReference type="Rhea" id="RHEA:13509"/>
        <dbReference type="ChEBI" id="CHEBI:15378"/>
        <dbReference type="ChEBI" id="CHEBI:33019"/>
        <dbReference type="ChEBI" id="CHEBI:46398"/>
        <dbReference type="ChEBI" id="CHEBI:57705"/>
        <dbReference type="ChEBI" id="CHEBI:57776"/>
        <dbReference type="EC" id="2.7.7.23"/>
    </reaction>
</comment>
<comment type="cofactor">
    <cofactor evidence="1">
        <name>Mg(2+)</name>
        <dbReference type="ChEBI" id="CHEBI:18420"/>
    </cofactor>
    <text evidence="1">Binds 1 Mg(2+) ion per subunit.</text>
</comment>
<comment type="pathway">
    <text evidence="1">Nucleotide-sugar biosynthesis; UDP-N-acetyl-alpha-D-glucosamine biosynthesis; N-acetyl-alpha-D-glucosamine 1-phosphate from alpha-D-glucosamine 6-phosphate (route II): step 2/2.</text>
</comment>
<comment type="pathway">
    <text evidence="1">Nucleotide-sugar biosynthesis; UDP-N-acetyl-alpha-D-glucosamine biosynthesis; UDP-N-acetyl-alpha-D-glucosamine from N-acetyl-alpha-D-glucosamine 1-phosphate: step 1/1.</text>
</comment>
<comment type="pathway">
    <text evidence="1">Bacterial outer membrane biogenesis; LPS lipid A biosynthesis.</text>
</comment>
<comment type="subunit">
    <text evidence="1">Homotrimer.</text>
</comment>
<comment type="subcellular location">
    <subcellularLocation>
        <location evidence="1">Cytoplasm</location>
    </subcellularLocation>
</comment>
<comment type="similarity">
    <text evidence="1">In the N-terminal section; belongs to the N-acetylglucosamine-1-phosphate uridyltransferase family.</text>
</comment>
<comment type="similarity">
    <text evidence="1">In the C-terminal section; belongs to the transferase hexapeptide repeat family.</text>
</comment>
<organism>
    <name type="scientific">Herminiimonas arsenicoxydans</name>
    <dbReference type="NCBI Taxonomy" id="204773"/>
    <lineage>
        <taxon>Bacteria</taxon>
        <taxon>Pseudomonadati</taxon>
        <taxon>Pseudomonadota</taxon>
        <taxon>Betaproteobacteria</taxon>
        <taxon>Burkholderiales</taxon>
        <taxon>Oxalobacteraceae</taxon>
        <taxon>Herminiimonas</taxon>
    </lineage>
</organism>
<gene>
    <name evidence="1" type="primary">glmU</name>
    <name type="ordered locus">HEAR3196</name>
</gene>
<accession>A4G9W6</accession>